<dbReference type="EC" id="2.5.1.7" evidence="1"/>
<dbReference type="EMBL" id="CP000036">
    <property type="protein sequence ID" value="ABB67692.1"/>
    <property type="molecule type" value="Genomic_DNA"/>
</dbReference>
<dbReference type="RefSeq" id="WP_000357260.1">
    <property type="nucleotide sequence ID" value="NC_007613.1"/>
</dbReference>
<dbReference type="SMR" id="Q31W66"/>
<dbReference type="KEGG" id="sbo:SBO_3193"/>
<dbReference type="HOGENOM" id="CLU_027387_0_0_6"/>
<dbReference type="UniPathway" id="UPA00219"/>
<dbReference type="Proteomes" id="UP000007067">
    <property type="component" value="Chromosome"/>
</dbReference>
<dbReference type="GO" id="GO:0005737">
    <property type="term" value="C:cytoplasm"/>
    <property type="evidence" value="ECO:0007669"/>
    <property type="project" value="UniProtKB-SubCell"/>
</dbReference>
<dbReference type="GO" id="GO:0008760">
    <property type="term" value="F:UDP-N-acetylglucosamine 1-carboxyvinyltransferase activity"/>
    <property type="evidence" value="ECO:0007669"/>
    <property type="project" value="UniProtKB-UniRule"/>
</dbReference>
<dbReference type="GO" id="GO:0051301">
    <property type="term" value="P:cell division"/>
    <property type="evidence" value="ECO:0007669"/>
    <property type="project" value="UniProtKB-KW"/>
</dbReference>
<dbReference type="GO" id="GO:0071555">
    <property type="term" value="P:cell wall organization"/>
    <property type="evidence" value="ECO:0007669"/>
    <property type="project" value="UniProtKB-KW"/>
</dbReference>
<dbReference type="GO" id="GO:0009252">
    <property type="term" value="P:peptidoglycan biosynthetic process"/>
    <property type="evidence" value="ECO:0007669"/>
    <property type="project" value="UniProtKB-UniRule"/>
</dbReference>
<dbReference type="GO" id="GO:0008360">
    <property type="term" value="P:regulation of cell shape"/>
    <property type="evidence" value="ECO:0007669"/>
    <property type="project" value="UniProtKB-KW"/>
</dbReference>
<dbReference type="GO" id="GO:0019277">
    <property type="term" value="P:UDP-N-acetylgalactosamine biosynthetic process"/>
    <property type="evidence" value="ECO:0007669"/>
    <property type="project" value="InterPro"/>
</dbReference>
<dbReference type="CDD" id="cd01555">
    <property type="entry name" value="UdpNAET"/>
    <property type="match status" value="1"/>
</dbReference>
<dbReference type="FunFam" id="3.65.10.10:FF:000002">
    <property type="entry name" value="UDP-N-acetylglucosamine 1-carboxyvinyltransferase"/>
    <property type="match status" value="1"/>
</dbReference>
<dbReference type="Gene3D" id="3.65.10.10">
    <property type="entry name" value="Enolpyruvate transferase domain"/>
    <property type="match status" value="2"/>
</dbReference>
<dbReference type="HAMAP" id="MF_00111">
    <property type="entry name" value="MurA"/>
    <property type="match status" value="1"/>
</dbReference>
<dbReference type="InterPro" id="IPR001986">
    <property type="entry name" value="Enolpyruvate_Tfrase_dom"/>
</dbReference>
<dbReference type="InterPro" id="IPR036968">
    <property type="entry name" value="Enolpyruvate_Tfrase_sf"/>
</dbReference>
<dbReference type="InterPro" id="IPR050068">
    <property type="entry name" value="MurA_subfamily"/>
</dbReference>
<dbReference type="InterPro" id="IPR013792">
    <property type="entry name" value="RNA3'P_cycl/enolpyr_Trfase_a/b"/>
</dbReference>
<dbReference type="InterPro" id="IPR005750">
    <property type="entry name" value="UDP_GlcNAc_COvinyl_MurA"/>
</dbReference>
<dbReference type="NCBIfam" id="TIGR01072">
    <property type="entry name" value="murA"/>
    <property type="match status" value="1"/>
</dbReference>
<dbReference type="NCBIfam" id="NF006873">
    <property type="entry name" value="PRK09369.1"/>
    <property type="match status" value="1"/>
</dbReference>
<dbReference type="PANTHER" id="PTHR43783">
    <property type="entry name" value="UDP-N-ACETYLGLUCOSAMINE 1-CARBOXYVINYLTRANSFERASE"/>
    <property type="match status" value="1"/>
</dbReference>
<dbReference type="PANTHER" id="PTHR43783:SF1">
    <property type="entry name" value="UDP-N-ACETYLGLUCOSAMINE 1-CARBOXYVINYLTRANSFERASE"/>
    <property type="match status" value="1"/>
</dbReference>
<dbReference type="Pfam" id="PF00275">
    <property type="entry name" value="EPSP_synthase"/>
    <property type="match status" value="1"/>
</dbReference>
<dbReference type="SUPFAM" id="SSF55205">
    <property type="entry name" value="EPT/RTPC-like"/>
    <property type="match status" value="1"/>
</dbReference>
<protein>
    <recommendedName>
        <fullName evidence="1">UDP-N-acetylglucosamine 1-carboxyvinyltransferase</fullName>
        <ecNumber evidence="1">2.5.1.7</ecNumber>
    </recommendedName>
    <alternativeName>
        <fullName evidence="1">Enoylpyruvate transferase</fullName>
    </alternativeName>
    <alternativeName>
        <fullName evidence="1">UDP-N-acetylglucosamine enolpyruvyl transferase</fullName>
        <shortName evidence="1">EPT</shortName>
    </alternativeName>
</protein>
<accession>Q31W66</accession>
<comment type="function">
    <text evidence="1">Cell wall formation. Adds enolpyruvyl to UDP-N-acetylglucosamine.</text>
</comment>
<comment type="catalytic activity">
    <reaction evidence="1">
        <text>phosphoenolpyruvate + UDP-N-acetyl-alpha-D-glucosamine = UDP-N-acetyl-3-O-(1-carboxyvinyl)-alpha-D-glucosamine + phosphate</text>
        <dbReference type="Rhea" id="RHEA:18681"/>
        <dbReference type="ChEBI" id="CHEBI:43474"/>
        <dbReference type="ChEBI" id="CHEBI:57705"/>
        <dbReference type="ChEBI" id="CHEBI:58702"/>
        <dbReference type="ChEBI" id="CHEBI:68483"/>
        <dbReference type="EC" id="2.5.1.7"/>
    </reaction>
</comment>
<comment type="pathway">
    <text evidence="1">Cell wall biogenesis; peptidoglycan biosynthesis.</text>
</comment>
<comment type="subcellular location">
    <subcellularLocation>
        <location evidence="1">Cytoplasm</location>
    </subcellularLocation>
</comment>
<comment type="similarity">
    <text evidence="1">Belongs to the EPSP synthase family. MurA subfamily.</text>
</comment>
<keyword id="KW-0131">Cell cycle</keyword>
<keyword id="KW-0132">Cell division</keyword>
<keyword id="KW-0133">Cell shape</keyword>
<keyword id="KW-0961">Cell wall biogenesis/degradation</keyword>
<keyword id="KW-0963">Cytoplasm</keyword>
<keyword id="KW-0573">Peptidoglycan synthesis</keyword>
<keyword id="KW-0670">Pyruvate</keyword>
<keyword id="KW-0808">Transferase</keyword>
<feature type="chain" id="PRO_0000231261" description="UDP-N-acetylglucosamine 1-carboxyvinyltransferase">
    <location>
        <begin position="1"/>
        <end position="419"/>
    </location>
</feature>
<feature type="active site" description="Proton donor" evidence="1">
    <location>
        <position position="115"/>
    </location>
</feature>
<feature type="binding site" evidence="1">
    <location>
        <begin position="22"/>
        <end position="23"/>
    </location>
    <ligand>
        <name>phosphoenolpyruvate</name>
        <dbReference type="ChEBI" id="CHEBI:58702"/>
    </ligand>
</feature>
<feature type="binding site" evidence="1">
    <location>
        <position position="91"/>
    </location>
    <ligand>
        <name>UDP-N-acetyl-alpha-D-glucosamine</name>
        <dbReference type="ChEBI" id="CHEBI:57705"/>
    </ligand>
</feature>
<feature type="binding site" evidence="1">
    <location>
        <begin position="120"/>
        <end position="124"/>
    </location>
    <ligand>
        <name>UDP-N-acetyl-alpha-D-glucosamine</name>
        <dbReference type="ChEBI" id="CHEBI:57705"/>
    </ligand>
</feature>
<feature type="binding site" evidence="1">
    <location>
        <begin position="160"/>
        <end position="163"/>
    </location>
    <ligand>
        <name>UDP-N-acetyl-alpha-D-glucosamine</name>
        <dbReference type="ChEBI" id="CHEBI:57705"/>
    </ligand>
</feature>
<feature type="binding site" evidence="1">
    <location>
        <position position="305"/>
    </location>
    <ligand>
        <name>UDP-N-acetyl-alpha-D-glucosamine</name>
        <dbReference type="ChEBI" id="CHEBI:57705"/>
    </ligand>
</feature>
<feature type="binding site" evidence="1">
    <location>
        <position position="327"/>
    </location>
    <ligand>
        <name>UDP-N-acetyl-alpha-D-glucosamine</name>
        <dbReference type="ChEBI" id="CHEBI:57705"/>
    </ligand>
</feature>
<feature type="modified residue" description="2-(S-cysteinyl)pyruvic acid O-phosphothioketal" evidence="1">
    <location>
        <position position="115"/>
    </location>
</feature>
<evidence type="ECO:0000255" key="1">
    <source>
        <dbReference type="HAMAP-Rule" id="MF_00111"/>
    </source>
</evidence>
<proteinExistence type="inferred from homology"/>
<name>MURA_SHIBS</name>
<reference key="1">
    <citation type="journal article" date="2005" name="Nucleic Acids Res.">
        <title>Genome dynamics and diversity of Shigella species, the etiologic agents of bacillary dysentery.</title>
        <authorList>
            <person name="Yang F."/>
            <person name="Yang J."/>
            <person name="Zhang X."/>
            <person name="Chen L."/>
            <person name="Jiang Y."/>
            <person name="Yan Y."/>
            <person name="Tang X."/>
            <person name="Wang J."/>
            <person name="Xiong Z."/>
            <person name="Dong J."/>
            <person name="Xue Y."/>
            <person name="Zhu Y."/>
            <person name="Xu X."/>
            <person name="Sun L."/>
            <person name="Chen S."/>
            <person name="Nie H."/>
            <person name="Peng J."/>
            <person name="Xu J."/>
            <person name="Wang Y."/>
            <person name="Yuan Z."/>
            <person name="Wen Y."/>
            <person name="Yao Z."/>
            <person name="Shen Y."/>
            <person name="Qiang B."/>
            <person name="Hou Y."/>
            <person name="Yu J."/>
            <person name="Jin Q."/>
        </authorList>
    </citation>
    <scope>NUCLEOTIDE SEQUENCE [LARGE SCALE GENOMIC DNA]</scope>
    <source>
        <strain>Sb227</strain>
    </source>
</reference>
<gene>
    <name evidence="1" type="primary">murA</name>
    <name type="ordered locus">SBO_3193</name>
</gene>
<sequence length="419" mass="44817">MDKFRVQGPTKLQGEVTISGAKNAALPILFAALLAEEPVEIQNVPKLKDVDTSMKLLSQLGAKVERNGSVHIDARDVNVFCAPYDLVKTMRASIWALGPLVARFGQGQVSLPGGCTIGARPVDLHISGLEQLGATIKLEEGYVKASVDGRLKGAHIVMDKVSVGATVTIMCAATLAEGTTIIENAAREPEIVDTANFLITLGAKISGQGTDRIVIEGVERLGGGVYRVLPDRIETGTFLVAAAISRGKIICRNAQPDTLDAVLAKLRDAGADIEVGEDWISLDMHGKRPKAVNVRTAPHPAFPTDMQAQFTLLNLVAEGTGFITETVFENRFMHVPELSRMGAHAEIESNTVICHGVEKLSGAQVMATDLRASASLVLAGCIAEGTTVVDRIYHIDRGYERIEDKLRALGANIKRVKGE</sequence>
<organism>
    <name type="scientific">Shigella boydii serotype 4 (strain Sb227)</name>
    <dbReference type="NCBI Taxonomy" id="300268"/>
    <lineage>
        <taxon>Bacteria</taxon>
        <taxon>Pseudomonadati</taxon>
        <taxon>Pseudomonadota</taxon>
        <taxon>Gammaproteobacteria</taxon>
        <taxon>Enterobacterales</taxon>
        <taxon>Enterobacteriaceae</taxon>
        <taxon>Shigella</taxon>
    </lineage>
</organism>